<proteinExistence type="evidence at protein level"/>
<keyword id="KW-0002">3D-structure</keyword>
<keyword id="KW-0027">Amidation</keyword>
<keyword id="KW-0903">Direct protein sequencing</keyword>
<keyword id="KW-1015">Disulfide bond</keyword>
<keyword id="KW-0964">Secreted</keyword>
<keyword id="KW-0732">Signal</keyword>
<reference key="1">
    <citation type="journal article" date="2018" name="Front. Pharmacol.">
        <title>Novel sodium channel inhibitor from leeches.</title>
        <authorList>
            <person name="Wang G."/>
            <person name="Long C."/>
            <person name="Liu W."/>
            <person name="Xu C."/>
            <person name="Zhang M."/>
            <person name="Li Q."/>
            <person name="Lu Q."/>
            <person name="Meng P."/>
            <person name="Li D."/>
            <person name="Rong M."/>
            <person name="Sun Z."/>
            <person name="Luo X."/>
            <person name="Lai R."/>
        </authorList>
    </citation>
    <scope>NUCLEOTIDE SEQUENCE [MRNA]</scope>
    <scope>PROTEIN SEQUENCE OF 26-48</scope>
    <scope>MASS SPECTROMETRY</scope>
    <scope>3D-STRUCTURE MODELING</scope>
    <scope>SUBCELLULAR LOCATION</scope>
    <scope>DISULFIDE BONDS</scope>
    <scope>AMIDATION AT ILE-48</scope>
    <source>
        <tissue>Salivary gland</tissue>
    </source>
</reference>
<reference evidence="7" key="2">
    <citation type="journal article" date="2020" name="Biochem. Pharmacol.">
        <title>Pharmacological activity and NMR solution structure of the leech peptide HSTX-I.</title>
        <authorList>
            <person name="McMahon K.L."/>
            <person name="Tay B."/>
            <person name="Deuis J.R."/>
            <person name="Tanaka B.S."/>
            <person name="Peigneur S."/>
            <person name="Jin A.H."/>
            <person name="Tytgat J."/>
            <person name="Waxman S.G."/>
            <person name="Dib-Hajj S.D."/>
            <person name="Vetter I."/>
            <person name="Schroeder C.I."/>
        </authorList>
    </citation>
    <scope>STRUCTURE BY NMR OF 26-48</scope>
    <scope>FUNCTION</scope>
    <scope>SYNTHESIS OF 26-48</scope>
    <scope>DISULFIDE BONDS</scope>
</reference>
<evidence type="ECO:0000255" key="1"/>
<evidence type="ECO:0000269" key="2">
    <source>
    </source>
</evidence>
<evidence type="ECO:0000269" key="3">
    <source>
    </source>
</evidence>
<evidence type="ECO:0000303" key="4">
    <source>
    </source>
</evidence>
<evidence type="ECO:0000303" key="5">
    <source>
    </source>
</evidence>
<evidence type="ECO:0000305" key="6"/>
<evidence type="ECO:0007744" key="7">
    <source>
        <dbReference type="PDB" id="6WQR"/>
    </source>
</evidence>
<evidence type="ECO:0007829" key="8">
    <source>
        <dbReference type="PDB" id="6WQR"/>
    </source>
</evidence>
<name>HSTX1_HAESL</name>
<sequence>MRTLLVFLLLAIFVAVLIGNVQVEAACKEYWECGAFLFCIEGICVPMIG</sequence>
<organism>
    <name type="scientific">Haemadipsa sylvestris</name>
    <name type="common">Indian leech</name>
    <dbReference type="NCBI Taxonomy" id="13555"/>
    <lineage>
        <taxon>Eukaryota</taxon>
        <taxon>Metazoa</taxon>
        <taxon>Spiralia</taxon>
        <taxon>Lophotrochozoa</taxon>
        <taxon>Annelida</taxon>
        <taxon>Clitellata</taxon>
        <taxon>Hirudinea</taxon>
        <taxon>Hirudinida</taxon>
        <taxon>Hirudiniformes</taxon>
        <taxon>Haemadipsidae</taxon>
        <taxon>Haemadipsa</taxon>
    </lineage>
</organism>
<comment type="function">
    <text evidence="2 3">Leech salivary gland peptide with unknown function (PubMed:32524995). It was originally described as exhibiting analgesic function by specifically inhibiting rodent Nav1.8/SCN10A and Nav1.9/SCN11A voltage-gated sodium channels, as well as showing analgesic activities in several mouse models (PubMed:29559913). In a second study, the synthetic peptide has been shown as having very weak activity on Nav1.8/SCN10A at the highest concentration tested (90 uM) and as being only very modestly active at hNav1.9/SCN11A, with a modest peak current size reduction (~19%) at high concentrations (10 uM) (PubMed:32524995). In addition, this second study reports no analgesic activity in a mouse model of inflammatory pain (PubMed:32524995).</text>
</comment>
<comment type="subcellular location">
    <subcellularLocation>
        <location evidence="6">Secreted</location>
    </subcellularLocation>
</comment>
<comment type="tissue specificity">
    <text evidence="2">Expressed in salivary glands. Highly expressed in the head, body and tail with a 2-3-fold higher expression in the head.</text>
</comment>
<comment type="mass spectrometry"/>
<comment type="miscellaneous">
    <text evidence="2 3">Does not show effect on voltage-gated calcium channels, potassium channels, and tetrodotoxin-sensitive sodium channels (PubMed:29559913). Does not show activity on Nav1.7/SCN9A, and shows very weak activity on cation channel TRPA1 (PubMed:32524995).</text>
</comment>
<comment type="similarity">
    <text evidence="6">Belongs to the annelide toxin family.</text>
</comment>
<accession>A0A2L1DGG0</accession>
<dbReference type="EMBL" id="MG786826">
    <property type="protein sequence ID" value="AVC68883.1"/>
    <property type="molecule type" value="mRNA"/>
</dbReference>
<dbReference type="PDB" id="6WQR">
    <property type="method" value="NMR"/>
    <property type="chains" value="A=26-48"/>
</dbReference>
<dbReference type="PDBsum" id="6WQR"/>
<dbReference type="BMRB" id="A0A2L1DGG0"/>
<dbReference type="SMR" id="A0A2L1DGG0"/>
<dbReference type="GO" id="GO:0005576">
    <property type="term" value="C:extracellular region"/>
    <property type="evidence" value="ECO:0007669"/>
    <property type="project" value="UniProtKB-SubCell"/>
</dbReference>
<feature type="signal peptide" evidence="1">
    <location>
        <begin position="1"/>
        <end position="21"/>
    </location>
</feature>
<feature type="propeptide" id="PRO_0000452215" evidence="6">
    <location>
        <begin position="22"/>
        <end position="28"/>
    </location>
</feature>
<feature type="peptide" id="PRO_5014992413" description="Peptide HSTX-I" evidence="2">
    <location>
        <begin position="26"/>
        <end position="48"/>
    </location>
</feature>
<feature type="modified residue" description="Isoleucine amide" evidence="2">
    <location>
        <position position="48"/>
    </location>
</feature>
<feature type="disulfide bond" evidence="2 3 7">
    <location>
        <begin position="27"/>
        <end position="39"/>
    </location>
</feature>
<feature type="disulfide bond" evidence="2 3 7">
    <location>
        <begin position="33"/>
        <end position="44"/>
    </location>
</feature>
<feature type="sequence conflict" description="In Ref. 1; AVC68883." evidence="6" ref="1">
    <original>L</original>
    <variation>LVFL</variation>
    <location>
        <position position="8"/>
    </location>
</feature>
<feature type="helix" evidence="8">
    <location>
        <begin position="30"/>
        <end position="33"/>
    </location>
</feature>
<feature type="strand" evidence="8">
    <location>
        <begin position="38"/>
        <end position="40"/>
    </location>
</feature>
<feature type="strand" evidence="8">
    <location>
        <begin position="43"/>
        <end position="45"/>
    </location>
</feature>
<protein>
    <recommendedName>
        <fullName evidence="4 5">Peptide HSTX-I</fullName>
    </recommendedName>
</protein>